<proteinExistence type="inferred from homology"/>
<feature type="chain" id="PRO_0000321780" description="Endoribonuclease YbeY">
    <location>
        <begin position="1"/>
        <end position="144"/>
    </location>
</feature>
<feature type="binding site" evidence="1">
    <location>
        <position position="104"/>
    </location>
    <ligand>
        <name>Zn(2+)</name>
        <dbReference type="ChEBI" id="CHEBI:29105"/>
        <note>catalytic</note>
    </ligand>
</feature>
<feature type="binding site" evidence="1">
    <location>
        <position position="108"/>
    </location>
    <ligand>
        <name>Zn(2+)</name>
        <dbReference type="ChEBI" id="CHEBI:29105"/>
        <note>catalytic</note>
    </ligand>
</feature>
<feature type="binding site" evidence="1">
    <location>
        <position position="114"/>
    </location>
    <ligand>
        <name>Zn(2+)</name>
        <dbReference type="ChEBI" id="CHEBI:29105"/>
        <note>catalytic</note>
    </ligand>
</feature>
<organism>
    <name type="scientific">Nitratiruptor sp. (strain SB155-2)</name>
    <dbReference type="NCBI Taxonomy" id="387092"/>
    <lineage>
        <taxon>Bacteria</taxon>
        <taxon>Pseudomonadati</taxon>
        <taxon>Campylobacterota</taxon>
        <taxon>Epsilonproteobacteria</taxon>
        <taxon>Nautiliales</taxon>
        <taxon>Nitratiruptoraceae</taxon>
        <taxon>Nitratiruptor</taxon>
    </lineage>
</organism>
<gene>
    <name evidence="1" type="primary">ybeY</name>
    <name type="ordered locus">NIS_0786</name>
</gene>
<sequence length="144" mass="16742">MQNRLIEIFNETDFDQFDIELMESITSQLTDRPVELMIVDDERMRTLNKTYRDIDKTTDVLSFPMQEIPNAPLGSIVINADKVLHTAKELGHSAKDEFALLYIHGLLHLLGYDHESDNGEMRAMEEKLIIEYNLPKSLIIRTYE</sequence>
<comment type="function">
    <text evidence="1">Single strand-specific metallo-endoribonuclease involved in late-stage 70S ribosome quality control and in maturation of the 3' terminus of the 16S rRNA.</text>
</comment>
<comment type="cofactor">
    <cofactor evidence="1">
        <name>Zn(2+)</name>
        <dbReference type="ChEBI" id="CHEBI:29105"/>
    </cofactor>
    <text evidence="1">Binds 1 zinc ion.</text>
</comment>
<comment type="subcellular location">
    <subcellularLocation>
        <location evidence="1">Cytoplasm</location>
    </subcellularLocation>
</comment>
<comment type="similarity">
    <text evidence="1">Belongs to the endoribonuclease YbeY family.</text>
</comment>
<reference key="1">
    <citation type="journal article" date="2007" name="Proc. Natl. Acad. Sci. U.S.A.">
        <title>Deep-sea vent epsilon-proteobacterial genomes provide insights into emergence of pathogens.</title>
        <authorList>
            <person name="Nakagawa S."/>
            <person name="Takaki Y."/>
            <person name="Shimamura S."/>
            <person name="Reysenbach A.-L."/>
            <person name="Takai K."/>
            <person name="Horikoshi K."/>
        </authorList>
    </citation>
    <scope>NUCLEOTIDE SEQUENCE [LARGE SCALE GENOMIC DNA]</scope>
    <source>
        <strain>SB155-2</strain>
    </source>
</reference>
<accession>A6Q339</accession>
<protein>
    <recommendedName>
        <fullName evidence="1">Endoribonuclease YbeY</fullName>
        <ecNumber evidence="1">3.1.-.-</ecNumber>
    </recommendedName>
</protein>
<name>YBEY_NITSB</name>
<dbReference type="EC" id="3.1.-.-" evidence="1"/>
<dbReference type="EMBL" id="AP009178">
    <property type="protein sequence ID" value="BAF69898.1"/>
    <property type="molecule type" value="Genomic_DNA"/>
</dbReference>
<dbReference type="RefSeq" id="WP_012082161.1">
    <property type="nucleotide sequence ID" value="NC_009662.1"/>
</dbReference>
<dbReference type="SMR" id="A6Q339"/>
<dbReference type="FunCoup" id="A6Q339">
    <property type="interactions" value="220"/>
</dbReference>
<dbReference type="STRING" id="387092.NIS_0786"/>
<dbReference type="KEGG" id="nis:NIS_0786"/>
<dbReference type="eggNOG" id="COG0319">
    <property type="taxonomic scope" value="Bacteria"/>
</dbReference>
<dbReference type="HOGENOM" id="CLU_106710_3_0_7"/>
<dbReference type="InParanoid" id="A6Q339"/>
<dbReference type="OrthoDB" id="9807740at2"/>
<dbReference type="Proteomes" id="UP000001118">
    <property type="component" value="Chromosome"/>
</dbReference>
<dbReference type="GO" id="GO:0005737">
    <property type="term" value="C:cytoplasm"/>
    <property type="evidence" value="ECO:0007669"/>
    <property type="project" value="UniProtKB-SubCell"/>
</dbReference>
<dbReference type="GO" id="GO:0004222">
    <property type="term" value="F:metalloendopeptidase activity"/>
    <property type="evidence" value="ECO:0007669"/>
    <property type="project" value="InterPro"/>
</dbReference>
<dbReference type="GO" id="GO:0004521">
    <property type="term" value="F:RNA endonuclease activity"/>
    <property type="evidence" value="ECO:0007669"/>
    <property type="project" value="UniProtKB-UniRule"/>
</dbReference>
<dbReference type="GO" id="GO:0008270">
    <property type="term" value="F:zinc ion binding"/>
    <property type="evidence" value="ECO:0007669"/>
    <property type="project" value="UniProtKB-UniRule"/>
</dbReference>
<dbReference type="GO" id="GO:0006364">
    <property type="term" value="P:rRNA processing"/>
    <property type="evidence" value="ECO:0007669"/>
    <property type="project" value="UniProtKB-UniRule"/>
</dbReference>
<dbReference type="Gene3D" id="3.40.390.30">
    <property type="entry name" value="Metalloproteases ('zincins'), catalytic domain"/>
    <property type="match status" value="1"/>
</dbReference>
<dbReference type="HAMAP" id="MF_00009">
    <property type="entry name" value="Endoribonucl_YbeY"/>
    <property type="match status" value="1"/>
</dbReference>
<dbReference type="InterPro" id="IPR023091">
    <property type="entry name" value="MetalPrtase_cat_dom_sf_prd"/>
</dbReference>
<dbReference type="InterPro" id="IPR002036">
    <property type="entry name" value="YbeY"/>
</dbReference>
<dbReference type="InterPro" id="IPR020549">
    <property type="entry name" value="YbeY_CS"/>
</dbReference>
<dbReference type="NCBIfam" id="TIGR00043">
    <property type="entry name" value="rRNA maturation RNase YbeY"/>
    <property type="match status" value="1"/>
</dbReference>
<dbReference type="PANTHER" id="PTHR46986">
    <property type="entry name" value="ENDORIBONUCLEASE YBEY, CHLOROPLASTIC"/>
    <property type="match status" value="1"/>
</dbReference>
<dbReference type="PANTHER" id="PTHR46986:SF1">
    <property type="entry name" value="ENDORIBONUCLEASE YBEY, CHLOROPLASTIC"/>
    <property type="match status" value="1"/>
</dbReference>
<dbReference type="Pfam" id="PF02130">
    <property type="entry name" value="YbeY"/>
    <property type="match status" value="1"/>
</dbReference>
<dbReference type="SUPFAM" id="SSF55486">
    <property type="entry name" value="Metalloproteases ('zincins'), catalytic domain"/>
    <property type="match status" value="1"/>
</dbReference>
<dbReference type="PROSITE" id="PS01306">
    <property type="entry name" value="UPF0054"/>
    <property type="match status" value="1"/>
</dbReference>
<evidence type="ECO:0000255" key="1">
    <source>
        <dbReference type="HAMAP-Rule" id="MF_00009"/>
    </source>
</evidence>
<keyword id="KW-0963">Cytoplasm</keyword>
<keyword id="KW-0255">Endonuclease</keyword>
<keyword id="KW-0378">Hydrolase</keyword>
<keyword id="KW-0479">Metal-binding</keyword>
<keyword id="KW-0540">Nuclease</keyword>
<keyword id="KW-1185">Reference proteome</keyword>
<keyword id="KW-0690">Ribosome biogenesis</keyword>
<keyword id="KW-0698">rRNA processing</keyword>
<keyword id="KW-0862">Zinc</keyword>